<feature type="chain" id="PRO_0000204393" description="Photosystem I reaction center subunit IV">
    <location>
        <begin position="1"/>
        <end position="69"/>
    </location>
</feature>
<dbReference type="EMBL" id="AF022186">
    <property type="protein sequence ID" value="AAB82665.1"/>
    <property type="molecule type" value="Genomic_DNA"/>
</dbReference>
<dbReference type="PIR" id="T11992">
    <property type="entry name" value="T11992"/>
</dbReference>
<dbReference type="RefSeq" id="NP_045096.1">
    <property type="nucleotide sequence ID" value="NC_001840.1"/>
</dbReference>
<dbReference type="SMR" id="O19924"/>
<dbReference type="GeneID" id="800275"/>
<dbReference type="GO" id="GO:0009535">
    <property type="term" value="C:chloroplast thylakoid membrane"/>
    <property type="evidence" value="ECO:0007669"/>
    <property type="project" value="UniProtKB-SubCell"/>
</dbReference>
<dbReference type="GO" id="GO:0009538">
    <property type="term" value="C:photosystem I reaction center"/>
    <property type="evidence" value="ECO:0007669"/>
    <property type="project" value="InterPro"/>
</dbReference>
<dbReference type="GO" id="GO:0015979">
    <property type="term" value="P:photosynthesis"/>
    <property type="evidence" value="ECO:0007669"/>
    <property type="project" value="UniProtKB-UniRule"/>
</dbReference>
<dbReference type="Gene3D" id="2.30.30.50">
    <property type="match status" value="1"/>
</dbReference>
<dbReference type="HAMAP" id="MF_00613">
    <property type="entry name" value="PSI_PsaE"/>
    <property type="match status" value="1"/>
</dbReference>
<dbReference type="InterPro" id="IPR008990">
    <property type="entry name" value="Elect_transpt_acc-like_dom_sf"/>
</dbReference>
<dbReference type="InterPro" id="IPR003375">
    <property type="entry name" value="PSI_PsaE"/>
</dbReference>
<dbReference type="NCBIfam" id="NF002745">
    <property type="entry name" value="PRK02749.1"/>
    <property type="match status" value="1"/>
</dbReference>
<dbReference type="PANTHER" id="PTHR34549">
    <property type="entry name" value="PHOTOSYSTEM I REACTION CENTER SUBUNIT IV A, CHLOROPLASTIC-RELATED"/>
    <property type="match status" value="1"/>
</dbReference>
<dbReference type="PANTHER" id="PTHR34549:SF2">
    <property type="entry name" value="PHOTOSYSTEM I SUBUNIT IV"/>
    <property type="match status" value="1"/>
</dbReference>
<dbReference type="Pfam" id="PF02427">
    <property type="entry name" value="PSI_PsaE"/>
    <property type="match status" value="1"/>
</dbReference>
<dbReference type="SUPFAM" id="SSF50090">
    <property type="entry name" value="Electron transport accessory proteins"/>
    <property type="match status" value="1"/>
</dbReference>
<protein>
    <recommendedName>
        <fullName>Photosystem I reaction center subunit IV</fullName>
        <shortName>PSI-E</shortName>
    </recommendedName>
</protein>
<evidence type="ECO:0000250" key="1"/>
<evidence type="ECO:0000305" key="2"/>
<proteinExistence type="inferred from homology"/>
<comment type="function">
    <text evidence="1">Stabilizes the interaction between PsaC and the PSI core, assists the docking of the ferredoxin to PSI and interacts with ferredoxin-NADP oxidoreductase.</text>
</comment>
<comment type="subcellular location">
    <subcellularLocation>
        <location evidence="1">Plastid</location>
        <location evidence="1">Chloroplast thylakoid membrane</location>
        <topology evidence="1">Peripheral membrane protein</topology>
    </subcellularLocation>
</comment>
<comment type="similarity">
    <text evidence="2">Belongs to the PsaE family.</text>
</comment>
<gene>
    <name type="primary">psaE</name>
</gene>
<accession>O19924</accession>
<name>PSAE_CYACA</name>
<reference key="1">
    <citation type="journal article" date="2000" name="J. Mol. Evol.">
        <title>The structure and gene repertoire of an ancient red algal plastid genome.</title>
        <authorList>
            <person name="Gloeckner G."/>
            <person name="Rosenthal A."/>
            <person name="Valentin K.-U."/>
        </authorList>
    </citation>
    <scope>NUCLEOTIDE SEQUENCE [LARGE SCALE GENOMIC DNA]</scope>
    <source>
        <strain>RK-1</strain>
    </source>
</reference>
<sequence length="69" mass="7902">MIKKGSQVRILRPESYWHNEIGTVATVDQSGIRYPVIVRFDKVNYSGINTNNFAVNELVEIQTNSYKAK</sequence>
<geneLocation type="chloroplast"/>
<keyword id="KW-0150">Chloroplast</keyword>
<keyword id="KW-0472">Membrane</keyword>
<keyword id="KW-0602">Photosynthesis</keyword>
<keyword id="KW-0603">Photosystem I</keyword>
<keyword id="KW-0934">Plastid</keyword>
<keyword id="KW-0793">Thylakoid</keyword>
<organism>
    <name type="scientific">Cyanidium caldarium</name>
    <name type="common">Red alga</name>
    <dbReference type="NCBI Taxonomy" id="2771"/>
    <lineage>
        <taxon>Eukaryota</taxon>
        <taxon>Rhodophyta</taxon>
        <taxon>Bangiophyceae</taxon>
        <taxon>Cyanidiales</taxon>
        <taxon>Cyanidiaceae</taxon>
        <taxon>Cyanidium</taxon>
    </lineage>
</organism>